<dbReference type="EMBL" id="AJ131182">
    <property type="protein sequence ID" value="CAA10316.1"/>
    <property type="molecule type" value="mRNA"/>
</dbReference>
<dbReference type="EMBL" id="AJ249366">
    <property type="protein sequence ID" value="CAB55628.1"/>
    <property type="molecule type" value="mRNA"/>
</dbReference>
<dbReference type="EMBL" id="AL136928">
    <property type="protein sequence ID" value="CAB66862.1"/>
    <property type="molecule type" value="mRNA"/>
</dbReference>
<dbReference type="EMBL" id="AK126476">
    <property type="protein sequence ID" value="BAG54333.1"/>
    <property type="molecule type" value="mRNA"/>
</dbReference>
<dbReference type="EMBL" id="AK315281">
    <property type="protein sequence ID" value="BAG37690.1"/>
    <property type="molecule type" value="mRNA"/>
</dbReference>
<dbReference type="EMBL" id="CR456886">
    <property type="protein sequence ID" value="CAG33167.1"/>
    <property type="molecule type" value="mRNA"/>
</dbReference>
<dbReference type="EMBL" id="AC002985">
    <property type="protein sequence ID" value="AAB81543.1"/>
    <property type="molecule type" value="Genomic_DNA"/>
</dbReference>
<dbReference type="EMBL" id="AC005197">
    <property type="protein sequence ID" value="AAC24612.1"/>
    <property type="molecule type" value="Genomic_DNA"/>
</dbReference>
<dbReference type="EMBL" id="CH471106">
    <property type="protein sequence ID" value="EAW84749.1"/>
    <property type="molecule type" value="Genomic_DNA"/>
</dbReference>
<dbReference type="EMBL" id="CH471106">
    <property type="protein sequence ID" value="EAW84752.1"/>
    <property type="molecule type" value="Genomic_DNA"/>
</dbReference>
<dbReference type="EMBL" id="CH471106">
    <property type="protein sequence ID" value="EAW84756.1"/>
    <property type="molecule type" value="Genomic_DNA"/>
</dbReference>
<dbReference type="EMBL" id="BC003155">
    <property type="protein sequence ID" value="AAH03155.1"/>
    <property type="molecule type" value="mRNA"/>
</dbReference>
<dbReference type="EMBL" id="BC007250">
    <property type="protein sequence ID" value="AAH07250.1"/>
    <property type="molecule type" value="mRNA"/>
</dbReference>
<dbReference type="EMBL" id="BC017285">
    <property type="protein sequence ID" value="AAH17285.1"/>
    <property type="molecule type" value="mRNA"/>
</dbReference>
<dbReference type="EMBL" id="BM454494">
    <property type="status" value="NOT_ANNOTATED_CDS"/>
    <property type="molecule type" value="mRNA"/>
</dbReference>
<dbReference type="CCDS" id="CCDS12387.1">
    <molecule id="O14579-1"/>
</dbReference>
<dbReference type="CCDS" id="CCDS12388.1">
    <molecule id="O14579-2"/>
</dbReference>
<dbReference type="CCDS" id="CCDS12389.1">
    <molecule id="O14579-3"/>
</dbReference>
<dbReference type="RefSeq" id="NP_009194.2">
    <molecule id="O14579-1"/>
    <property type="nucleotide sequence ID" value="NM_007263.3"/>
</dbReference>
<dbReference type="RefSeq" id="NP_955474.1">
    <molecule id="O14579-2"/>
    <property type="nucleotide sequence ID" value="NM_199442.2"/>
</dbReference>
<dbReference type="RefSeq" id="NP_955476.1">
    <molecule id="O14579-3"/>
    <property type="nucleotide sequence ID" value="NM_199444.2"/>
</dbReference>
<dbReference type="PDB" id="6TZT">
    <property type="method" value="X-ray"/>
    <property type="resolution" value="3.06 A"/>
    <property type="chains" value="A/C=1-308"/>
</dbReference>
<dbReference type="PDB" id="6U3V">
    <property type="method" value="X-ray"/>
    <property type="resolution" value="2.96 A"/>
    <property type="chains" value="A/C=1-308"/>
</dbReference>
<dbReference type="PDBsum" id="6TZT"/>
<dbReference type="PDBsum" id="6U3V"/>
<dbReference type="SMR" id="O14579"/>
<dbReference type="BioGRID" id="116447">
    <property type="interactions" value="346"/>
</dbReference>
<dbReference type="ComplexPortal" id="CPX-7803">
    <property type="entry name" value="COPI vesicle coat complex, COPG1-COPZ1 variant"/>
</dbReference>
<dbReference type="ComplexPortal" id="CPX-7969">
    <property type="entry name" value="COPI vesicle coat complex, COPG2-COPZ1 variant"/>
</dbReference>
<dbReference type="ComplexPortal" id="CPX-7970">
    <property type="entry name" value="COPI vesicle coat complex, COPG1-COPZ2 variant"/>
</dbReference>
<dbReference type="FunCoup" id="O14579">
    <property type="interactions" value="3228"/>
</dbReference>
<dbReference type="IntAct" id="O14579">
    <property type="interactions" value="176"/>
</dbReference>
<dbReference type="MINT" id="O14579"/>
<dbReference type="STRING" id="9606.ENSP00000469035"/>
<dbReference type="GlyGen" id="O14579">
    <property type="glycosylation" value="1 site, 1 O-linked glycan (1 site)"/>
</dbReference>
<dbReference type="iPTMnet" id="O14579"/>
<dbReference type="MetOSite" id="O14579"/>
<dbReference type="PhosphoSitePlus" id="O14579"/>
<dbReference type="SwissPalm" id="O14579"/>
<dbReference type="BioMuta" id="COPE"/>
<dbReference type="OGP" id="O14579"/>
<dbReference type="jPOST" id="O14579"/>
<dbReference type="MassIVE" id="O14579"/>
<dbReference type="PaxDb" id="9606-ENSP00000262812"/>
<dbReference type="PeptideAtlas" id="O14579"/>
<dbReference type="ProteomicsDB" id="48098">
    <molecule id="O14579-1"/>
</dbReference>
<dbReference type="ProteomicsDB" id="48099">
    <molecule id="O14579-2"/>
</dbReference>
<dbReference type="ProteomicsDB" id="957"/>
<dbReference type="Pumba" id="O14579"/>
<dbReference type="Antibodypedia" id="28232">
    <property type="antibodies" value="172 antibodies from 28 providers"/>
</dbReference>
<dbReference type="DNASU" id="11316"/>
<dbReference type="Ensembl" id="ENST00000262812.9">
    <molecule id="O14579-1"/>
    <property type="protein sequence ID" value="ENSP00000262812.3"/>
    <property type="gene ID" value="ENSG00000105669.14"/>
</dbReference>
<dbReference type="Ensembl" id="ENST00000349893.8">
    <molecule id="O14579-3"/>
    <property type="protein sequence ID" value="ENSP00000343134.3"/>
    <property type="gene ID" value="ENSG00000105669.14"/>
</dbReference>
<dbReference type="Ensembl" id="ENST00000351079.8">
    <molecule id="O14579-2"/>
    <property type="protein sequence ID" value="ENSP00000345674.3"/>
    <property type="gene ID" value="ENSG00000105669.14"/>
</dbReference>
<dbReference type="GeneID" id="11316"/>
<dbReference type="KEGG" id="hsa:11316"/>
<dbReference type="MANE-Select" id="ENST00000262812.9">
    <property type="protein sequence ID" value="ENSP00000262812.3"/>
    <property type="RefSeq nucleotide sequence ID" value="NM_007263.4"/>
    <property type="RefSeq protein sequence ID" value="NP_009194.2"/>
</dbReference>
<dbReference type="UCSC" id="uc002nkk.4">
    <molecule id="O14579-1"/>
    <property type="organism name" value="human"/>
</dbReference>
<dbReference type="AGR" id="HGNC:2234"/>
<dbReference type="CTD" id="11316"/>
<dbReference type="DisGeNET" id="11316"/>
<dbReference type="GeneCards" id="COPE"/>
<dbReference type="HGNC" id="HGNC:2234">
    <property type="gene designation" value="COPE"/>
</dbReference>
<dbReference type="HPA" id="ENSG00000105669">
    <property type="expression patterns" value="Low tissue specificity"/>
</dbReference>
<dbReference type="MIM" id="606942">
    <property type="type" value="gene"/>
</dbReference>
<dbReference type="neXtProt" id="NX_O14579"/>
<dbReference type="OpenTargets" id="ENSG00000105669"/>
<dbReference type="PharmGKB" id="PA26750"/>
<dbReference type="VEuPathDB" id="HostDB:ENSG00000105669"/>
<dbReference type="eggNOG" id="KOG3081">
    <property type="taxonomic scope" value="Eukaryota"/>
</dbReference>
<dbReference type="GeneTree" id="ENSGT00390000003478"/>
<dbReference type="HOGENOM" id="CLU_049363_0_0_1"/>
<dbReference type="InParanoid" id="O14579"/>
<dbReference type="OMA" id="MIVLSQH"/>
<dbReference type="OrthoDB" id="310217at2759"/>
<dbReference type="PAN-GO" id="O14579">
    <property type="GO annotations" value="3 GO annotations based on evolutionary models"/>
</dbReference>
<dbReference type="PhylomeDB" id="O14579"/>
<dbReference type="TreeFam" id="TF313390"/>
<dbReference type="PathwayCommons" id="O14579"/>
<dbReference type="Reactome" id="R-HSA-6807878">
    <property type="pathway name" value="COPI-mediated anterograde transport"/>
</dbReference>
<dbReference type="Reactome" id="R-HSA-6811434">
    <property type="pathway name" value="COPI-dependent Golgi-to-ER retrograde traffic"/>
</dbReference>
<dbReference type="SignaLink" id="O14579"/>
<dbReference type="SIGNOR" id="O14579"/>
<dbReference type="BioGRID-ORCS" id="11316">
    <property type="hits" value="766 hits in 1150 CRISPR screens"/>
</dbReference>
<dbReference type="ChiTaRS" id="COPE">
    <property type="organism name" value="human"/>
</dbReference>
<dbReference type="GeneWiki" id="COPE_(gene)"/>
<dbReference type="GenomeRNAi" id="11316"/>
<dbReference type="Pharos" id="O14579">
    <property type="development level" value="Tbio"/>
</dbReference>
<dbReference type="PRO" id="PR:O14579"/>
<dbReference type="Proteomes" id="UP000005640">
    <property type="component" value="Chromosome 19"/>
</dbReference>
<dbReference type="RNAct" id="O14579">
    <property type="molecule type" value="protein"/>
</dbReference>
<dbReference type="Bgee" id="ENSG00000105669">
    <property type="expression patterns" value="Expressed in right testis and 199 other cell types or tissues"/>
</dbReference>
<dbReference type="ExpressionAtlas" id="O14579">
    <property type="expression patterns" value="baseline and differential"/>
</dbReference>
<dbReference type="GO" id="GO:0030126">
    <property type="term" value="C:COPI vesicle coat"/>
    <property type="evidence" value="ECO:0000250"/>
    <property type="project" value="UniProtKB"/>
</dbReference>
<dbReference type="GO" id="GO:0005829">
    <property type="term" value="C:cytosol"/>
    <property type="evidence" value="ECO:0000304"/>
    <property type="project" value="Reactome"/>
</dbReference>
<dbReference type="GO" id="GO:0005789">
    <property type="term" value="C:endoplasmic reticulum membrane"/>
    <property type="evidence" value="ECO:0000304"/>
    <property type="project" value="Reactome"/>
</dbReference>
<dbReference type="GO" id="GO:0005794">
    <property type="term" value="C:Golgi apparatus"/>
    <property type="evidence" value="ECO:0000314"/>
    <property type="project" value="LIFEdb"/>
</dbReference>
<dbReference type="GO" id="GO:0000139">
    <property type="term" value="C:Golgi membrane"/>
    <property type="evidence" value="ECO:0000304"/>
    <property type="project" value="Reactome"/>
</dbReference>
<dbReference type="GO" id="GO:0005654">
    <property type="term" value="C:nucleoplasm"/>
    <property type="evidence" value="ECO:0000314"/>
    <property type="project" value="HPA"/>
</dbReference>
<dbReference type="GO" id="GO:0030133">
    <property type="term" value="C:transport vesicle"/>
    <property type="evidence" value="ECO:0000304"/>
    <property type="project" value="Reactome"/>
</dbReference>
<dbReference type="GO" id="GO:0005198">
    <property type="term" value="F:structural molecule activity"/>
    <property type="evidence" value="ECO:0007669"/>
    <property type="project" value="InterPro"/>
</dbReference>
<dbReference type="GO" id="GO:0006888">
    <property type="term" value="P:endoplasmic reticulum to Golgi vesicle-mediated transport"/>
    <property type="evidence" value="ECO:0000318"/>
    <property type="project" value="GO_Central"/>
</dbReference>
<dbReference type="GO" id="GO:0006891">
    <property type="term" value="P:intra-Golgi vesicle-mediated transport"/>
    <property type="evidence" value="ECO:0000250"/>
    <property type="project" value="UniProtKB"/>
</dbReference>
<dbReference type="GO" id="GO:0099612">
    <property type="term" value="P:protein localization to axon"/>
    <property type="evidence" value="ECO:0007669"/>
    <property type="project" value="Ensembl"/>
</dbReference>
<dbReference type="GO" id="GO:0015031">
    <property type="term" value="P:protein transport"/>
    <property type="evidence" value="ECO:0007669"/>
    <property type="project" value="UniProtKB-KW"/>
</dbReference>
<dbReference type="GO" id="GO:0006890">
    <property type="term" value="P:retrograde vesicle-mediated transport, Golgi to endoplasmic reticulum"/>
    <property type="evidence" value="ECO:0007669"/>
    <property type="project" value="InterPro"/>
</dbReference>
<dbReference type="FunFam" id="1.25.40.10:FF:000148">
    <property type="entry name" value="Coatomer subunit epsilon"/>
    <property type="match status" value="1"/>
</dbReference>
<dbReference type="Gene3D" id="1.25.40.10">
    <property type="entry name" value="Tetratricopeptide repeat domain"/>
    <property type="match status" value="1"/>
</dbReference>
<dbReference type="InterPro" id="IPR006822">
    <property type="entry name" value="Coatomer_esu"/>
</dbReference>
<dbReference type="InterPro" id="IPR011990">
    <property type="entry name" value="TPR-like_helical_dom_sf"/>
</dbReference>
<dbReference type="PANTHER" id="PTHR10805">
    <property type="entry name" value="COATOMER SUBUNIT EPSILON"/>
    <property type="match status" value="1"/>
</dbReference>
<dbReference type="PANTHER" id="PTHR10805:SF0">
    <property type="entry name" value="COATOMER SUBUNIT EPSILON"/>
    <property type="match status" value="1"/>
</dbReference>
<dbReference type="Pfam" id="PF04733">
    <property type="entry name" value="Coatomer_E"/>
    <property type="match status" value="1"/>
</dbReference>
<dbReference type="PIRSF" id="PIRSF016478">
    <property type="entry name" value="Coatomer_esu"/>
    <property type="match status" value="1"/>
</dbReference>
<dbReference type="SUPFAM" id="SSF48452">
    <property type="entry name" value="TPR-like"/>
    <property type="match status" value="1"/>
</dbReference>
<reference key="1">
    <citation type="journal article" date="1999" name="Curr. Biol.">
        <title>Segregation of COPI-rich and anterograde-cargo-rich domains in endoplasmic-reticulum-to-Golgi transport complexes.</title>
        <authorList>
            <person name="Shima D.T."/>
            <person name="Scales S.J."/>
            <person name="Kreis T.E."/>
            <person name="Pepperkok R."/>
        </authorList>
    </citation>
    <scope>NUCLEOTIDE SEQUENCE [MRNA]</scope>
    <scope>VARIANT ILE-117</scope>
    <source>
        <tissue>Brain</tissue>
    </source>
</reference>
<reference key="2">
    <citation type="submission" date="1999-09" db="EMBL/GenBank/DDBJ databases">
        <title>Cloning, expression, and phosphorylation by protein kinase A of human epsilon-COP.</title>
        <authorList>
            <person name="Baehr C."/>
            <person name="Herzog A."/>
            <person name="Haeussermann S."/>
            <person name="Marks F."/>
            <person name="Gschwendt M."/>
        </authorList>
    </citation>
    <scope>NUCLEOTIDE SEQUENCE [MRNA] (ISOFORM 1)</scope>
</reference>
<reference key="3">
    <citation type="journal article" date="2001" name="Genome Res.">
        <title>Towards a catalog of human genes and proteins: sequencing and analysis of 500 novel complete protein coding human cDNAs.</title>
        <authorList>
            <person name="Wiemann S."/>
            <person name="Weil B."/>
            <person name="Wellenreuther R."/>
            <person name="Gassenhuber J."/>
            <person name="Glassl S."/>
            <person name="Ansorge W."/>
            <person name="Boecher M."/>
            <person name="Bloecker H."/>
            <person name="Bauersachs S."/>
            <person name="Blum H."/>
            <person name="Lauber J."/>
            <person name="Duesterhoeft A."/>
            <person name="Beyer A."/>
            <person name="Koehrer K."/>
            <person name="Strack N."/>
            <person name="Mewes H.-W."/>
            <person name="Ottenwaelder B."/>
            <person name="Obermaier B."/>
            <person name="Tampe J."/>
            <person name="Heubner D."/>
            <person name="Wambutt R."/>
            <person name="Korn B."/>
            <person name="Klein M."/>
            <person name="Poustka A."/>
        </authorList>
    </citation>
    <scope>NUCLEOTIDE SEQUENCE [LARGE SCALE MRNA] (ISOFORM 1)</scope>
    <source>
        <tissue>Uterus</tissue>
    </source>
</reference>
<reference key="4">
    <citation type="journal article" date="2004" name="Nat. Genet.">
        <title>Complete sequencing and characterization of 21,243 full-length human cDNAs.</title>
        <authorList>
            <person name="Ota T."/>
            <person name="Suzuki Y."/>
            <person name="Nishikawa T."/>
            <person name="Otsuki T."/>
            <person name="Sugiyama T."/>
            <person name="Irie R."/>
            <person name="Wakamatsu A."/>
            <person name="Hayashi K."/>
            <person name="Sato H."/>
            <person name="Nagai K."/>
            <person name="Kimura K."/>
            <person name="Makita H."/>
            <person name="Sekine M."/>
            <person name="Obayashi M."/>
            <person name="Nishi T."/>
            <person name="Shibahara T."/>
            <person name="Tanaka T."/>
            <person name="Ishii S."/>
            <person name="Yamamoto J."/>
            <person name="Saito K."/>
            <person name="Kawai Y."/>
            <person name="Isono Y."/>
            <person name="Nakamura Y."/>
            <person name="Nagahari K."/>
            <person name="Murakami K."/>
            <person name="Yasuda T."/>
            <person name="Iwayanagi T."/>
            <person name="Wagatsuma M."/>
            <person name="Shiratori A."/>
            <person name="Sudo H."/>
            <person name="Hosoiri T."/>
            <person name="Kaku Y."/>
            <person name="Kodaira H."/>
            <person name="Kondo H."/>
            <person name="Sugawara M."/>
            <person name="Takahashi M."/>
            <person name="Kanda K."/>
            <person name="Yokoi T."/>
            <person name="Furuya T."/>
            <person name="Kikkawa E."/>
            <person name="Omura Y."/>
            <person name="Abe K."/>
            <person name="Kamihara K."/>
            <person name="Katsuta N."/>
            <person name="Sato K."/>
            <person name="Tanikawa M."/>
            <person name="Yamazaki M."/>
            <person name="Ninomiya K."/>
            <person name="Ishibashi T."/>
            <person name="Yamashita H."/>
            <person name="Murakawa K."/>
            <person name="Fujimori K."/>
            <person name="Tanai H."/>
            <person name="Kimata M."/>
            <person name="Watanabe M."/>
            <person name="Hiraoka S."/>
            <person name="Chiba Y."/>
            <person name="Ishida S."/>
            <person name="Ono Y."/>
            <person name="Takiguchi S."/>
            <person name="Watanabe S."/>
            <person name="Yosida M."/>
            <person name="Hotuta T."/>
            <person name="Kusano J."/>
            <person name="Kanehori K."/>
            <person name="Takahashi-Fujii A."/>
            <person name="Hara H."/>
            <person name="Tanase T.-O."/>
            <person name="Nomura Y."/>
            <person name="Togiya S."/>
            <person name="Komai F."/>
            <person name="Hara R."/>
            <person name="Takeuchi K."/>
            <person name="Arita M."/>
            <person name="Imose N."/>
            <person name="Musashino K."/>
            <person name="Yuuki H."/>
            <person name="Oshima A."/>
            <person name="Sasaki N."/>
            <person name="Aotsuka S."/>
            <person name="Yoshikawa Y."/>
            <person name="Matsunawa H."/>
            <person name="Ichihara T."/>
            <person name="Shiohata N."/>
            <person name="Sano S."/>
            <person name="Moriya S."/>
            <person name="Momiyama H."/>
            <person name="Satoh N."/>
            <person name="Takami S."/>
            <person name="Terashima Y."/>
            <person name="Suzuki O."/>
            <person name="Nakagawa S."/>
            <person name="Senoh A."/>
            <person name="Mizoguchi H."/>
            <person name="Goto Y."/>
            <person name="Shimizu F."/>
            <person name="Wakebe H."/>
            <person name="Hishigaki H."/>
            <person name="Watanabe T."/>
            <person name="Sugiyama A."/>
            <person name="Takemoto M."/>
            <person name="Kawakami B."/>
            <person name="Yamazaki M."/>
            <person name="Watanabe K."/>
            <person name="Kumagai A."/>
            <person name="Itakura S."/>
            <person name="Fukuzumi Y."/>
            <person name="Fujimori Y."/>
            <person name="Komiyama M."/>
            <person name="Tashiro H."/>
            <person name="Tanigami A."/>
            <person name="Fujiwara T."/>
            <person name="Ono T."/>
            <person name="Yamada K."/>
            <person name="Fujii Y."/>
            <person name="Ozaki K."/>
            <person name="Hirao M."/>
            <person name="Ohmori Y."/>
            <person name="Kawabata A."/>
            <person name="Hikiji T."/>
            <person name="Kobatake N."/>
            <person name="Inagaki H."/>
            <person name="Ikema Y."/>
            <person name="Okamoto S."/>
            <person name="Okitani R."/>
            <person name="Kawakami T."/>
            <person name="Noguchi S."/>
            <person name="Itoh T."/>
            <person name="Shigeta K."/>
            <person name="Senba T."/>
            <person name="Matsumura K."/>
            <person name="Nakajima Y."/>
            <person name="Mizuno T."/>
            <person name="Morinaga M."/>
            <person name="Sasaki M."/>
            <person name="Togashi T."/>
            <person name="Oyama M."/>
            <person name="Hata H."/>
            <person name="Watanabe M."/>
            <person name="Komatsu T."/>
            <person name="Mizushima-Sugano J."/>
            <person name="Satoh T."/>
            <person name="Shirai Y."/>
            <person name="Takahashi Y."/>
            <person name="Nakagawa K."/>
            <person name="Okumura K."/>
            <person name="Nagase T."/>
            <person name="Nomura N."/>
            <person name="Kikuchi H."/>
            <person name="Masuho Y."/>
            <person name="Yamashita R."/>
            <person name="Nakai K."/>
            <person name="Yada T."/>
            <person name="Nakamura Y."/>
            <person name="Ohara O."/>
            <person name="Isogai T."/>
            <person name="Sugano S."/>
        </authorList>
    </citation>
    <scope>NUCLEOTIDE SEQUENCE [LARGE SCALE MRNA] (ISOFORMS 1 AND 2)</scope>
    <scope>VARIANT ILE-117</scope>
    <source>
        <tissue>Testis</tissue>
        <tissue>Uterus</tissue>
    </source>
</reference>
<reference key="5">
    <citation type="submission" date="2004-06" db="EMBL/GenBank/DDBJ databases">
        <title>Cloning of human full open reading frames in Gateway(TM) system entry vector (pDONR201).</title>
        <authorList>
            <person name="Ebert L."/>
            <person name="Schick M."/>
            <person name="Neubert P."/>
            <person name="Schatten R."/>
            <person name="Henze S."/>
            <person name="Korn B."/>
        </authorList>
    </citation>
    <scope>NUCLEOTIDE SEQUENCE [LARGE SCALE MRNA] (ISOFORM 1)</scope>
</reference>
<reference key="6">
    <citation type="journal article" date="2004" name="Nature">
        <title>The DNA sequence and biology of human chromosome 19.</title>
        <authorList>
            <person name="Grimwood J."/>
            <person name="Gordon L.A."/>
            <person name="Olsen A.S."/>
            <person name="Terry A."/>
            <person name="Schmutz J."/>
            <person name="Lamerdin J.E."/>
            <person name="Hellsten U."/>
            <person name="Goodstein D."/>
            <person name="Couronne O."/>
            <person name="Tran-Gyamfi M."/>
            <person name="Aerts A."/>
            <person name="Altherr M."/>
            <person name="Ashworth L."/>
            <person name="Bajorek E."/>
            <person name="Black S."/>
            <person name="Branscomb E."/>
            <person name="Caenepeel S."/>
            <person name="Carrano A.V."/>
            <person name="Caoile C."/>
            <person name="Chan Y.M."/>
            <person name="Christensen M."/>
            <person name="Cleland C.A."/>
            <person name="Copeland A."/>
            <person name="Dalin E."/>
            <person name="Dehal P."/>
            <person name="Denys M."/>
            <person name="Detter J.C."/>
            <person name="Escobar J."/>
            <person name="Flowers D."/>
            <person name="Fotopulos D."/>
            <person name="Garcia C."/>
            <person name="Georgescu A.M."/>
            <person name="Glavina T."/>
            <person name="Gomez M."/>
            <person name="Gonzales E."/>
            <person name="Groza M."/>
            <person name="Hammon N."/>
            <person name="Hawkins T."/>
            <person name="Haydu L."/>
            <person name="Ho I."/>
            <person name="Huang W."/>
            <person name="Israni S."/>
            <person name="Jett J."/>
            <person name="Kadner K."/>
            <person name="Kimball H."/>
            <person name="Kobayashi A."/>
            <person name="Larionov V."/>
            <person name="Leem S.-H."/>
            <person name="Lopez F."/>
            <person name="Lou Y."/>
            <person name="Lowry S."/>
            <person name="Malfatti S."/>
            <person name="Martinez D."/>
            <person name="McCready P.M."/>
            <person name="Medina C."/>
            <person name="Morgan J."/>
            <person name="Nelson K."/>
            <person name="Nolan M."/>
            <person name="Ovcharenko I."/>
            <person name="Pitluck S."/>
            <person name="Pollard M."/>
            <person name="Popkie A.P."/>
            <person name="Predki P."/>
            <person name="Quan G."/>
            <person name="Ramirez L."/>
            <person name="Rash S."/>
            <person name="Retterer J."/>
            <person name="Rodriguez A."/>
            <person name="Rogers S."/>
            <person name="Salamov A."/>
            <person name="Salazar A."/>
            <person name="She X."/>
            <person name="Smith D."/>
            <person name="Slezak T."/>
            <person name="Solovyev V."/>
            <person name="Thayer N."/>
            <person name="Tice H."/>
            <person name="Tsai M."/>
            <person name="Ustaszewska A."/>
            <person name="Vo N."/>
            <person name="Wagner M."/>
            <person name="Wheeler J."/>
            <person name="Wu K."/>
            <person name="Xie G."/>
            <person name="Yang J."/>
            <person name="Dubchak I."/>
            <person name="Furey T.S."/>
            <person name="DeJong P."/>
            <person name="Dickson M."/>
            <person name="Gordon D."/>
            <person name="Eichler E.E."/>
            <person name="Pennacchio L.A."/>
            <person name="Richardson P."/>
            <person name="Stubbs L."/>
            <person name="Rokhsar D.S."/>
            <person name="Myers R.M."/>
            <person name="Rubin E.M."/>
            <person name="Lucas S.M."/>
        </authorList>
    </citation>
    <scope>NUCLEOTIDE SEQUENCE [LARGE SCALE GENOMIC DNA]</scope>
</reference>
<reference key="7">
    <citation type="submission" date="2005-07" db="EMBL/GenBank/DDBJ databases">
        <authorList>
            <person name="Mural R.J."/>
            <person name="Istrail S."/>
            <person name="Sutton G.G."/>
            <person name="Florea L."/>
            <person name="Halpern A.L."/>
            <person name="Mobarry C.M."/>
            <person name="Lippert R."/>
            <person name="Walenz B."/>
            <person name="Shatkay H."/>
            <person name="Dew I."/>
            <person name="Miller J.R."/>
            <person name="Flanigan M.J."/>
            <person name="Edwards N.J."/>
            <person name="Bolanos R."/>
            <person name="Fasulo D."/>
            <person name="Halldorsson B.V."/>
            <person name="Hannenhalli S."/>
            <person name="Turner R."/>
            <person name="Yooseph S."/>
            <person name="Lu F."/>
            <person name="Nusskern D.R."/>
            <person name="Shue B.C."/>
            <person name="Zheng X.H."/>
            <person name="Zhong F."/>
            <person name="Delcher A.L."/>
            <person name="Huson D.H."/>
            <person name="Kravitz S.A."/>
            <person name="Mouchard L."/>
            <person name="Reinert K."/>
            <person name="Remington K.A."/>
            <person name="Clark A.G."/>
            <person name="Waterman M.S."/>
            <person name="Eichler E.E."/>
            <person name="Adams M.D."/>
            <person name="Hunkapiller M.W."/>
            <person name="Myers E.W."/>
            <person name="Venter J.C."/>
        </authorList>
    </citation>
    <scope>NUCLEOTIDE SEQUENCE [LARGE SCALE GENOMIC DNA]</scope>
</reference>
<reference key="8">
    <citation type="journal article" date="2004" name="Genome Res.">
        <title>The status, quality, and expansion of the NIH full-length cDNA project: the Mammalian Gene Collection (MGC).</title>
        <authorList>
            <consortium name="The MGC Project Team"/>
        </authorList>
    </citation>
    <scope>NUCLEOTIDE SEQUENCE [LARGE SCALE MRNA] (ISOFORMS 1 AND 3)</scope>
    <source>
        <tissue>Brain</tissue>
        <tissue>Embryonic carcinoma</tissue>
        <tissue>Lymph</tissue>
        <tissue>Skin</tissue>
    </source>
</reference>
<reference key="9">
    <citation type="submission" date="2009-03" db="UniProtKB">
        <authorList>
            <person name="Bienvenut W.V."/>
            <person name="Waridel P."/>
            <person name="Quadroni M."/>
        </authorList>
    </citation>
    <scope>PROTEIN SEQUENCE OF 2-23; 66-85 AND 172-211</scope>
    <scope>CLEAVAGE OF INITIATOR METHIONINE</scope>
    <scope>IDENTIFICATION BY MASS SPECTROMETRY</scope>
    <source>
        <tissue>Embryonic kidney</tissue>
    </source>
</reference>
<reference key="10">
    <citation type="journal article" date="2008" name="Mol. Cell">
        <title>Kinase-selective enrichment enables quantitative phosphoproteomics of the kinome across the cell cycle.</title>
        <authorList>
            <person name="Daub H."/>
            <person name="Olsen J.V."/>
            <person name="Bairlein M."/>
            <person name="Gnad F."/>
            <person name="Oppermann F.S."/>
            <person name="Korner R."/>
            <person name="Greff Z."/>
            <person name="Keri G."/>
            <person name="Stemmann O."/>
            <person name="Mann M."/>
        </authorList>
    </citation>
    <scope>IDENTIFICATION BY MASS SPECTROMETRY [LARGE SCALE ANALYSIS]</scope>
    <source>
        <tissue>Cervix carcinoma</tissue>
    </source>
</reference>
<reference key="11">
    <citation type="journal article" date="2008" name="Mol. Cell. Biochem.">
        <title>Ubiquitylation of epsilon-COP by PIRH2 and regulation of the secretion of PSA.</title>
        <authorList>
            <person name="Maruyama S."/>
            <person name="Miyajima N."/>
            <person name="Bohgaki M."/>
            <person name="Tsukiyama T."/>
            <person name="Shigemura M."/>
            <person name="Nonomura K."/>
            <person name="Hatakeyama S."/>
        </authorList>
    </citation>
    <scope>UBIQUITINATION BY RCHY1</scope>
</reference>
<reference key="12">
    <citation type="journal article" date="2008" name="Proc. Natl. Acad. Sci. U.S.A.">
        <title>A quantitative atlas of mitotic phosphorylation.</title>
        <authorList>
            <person name="Dephoure N."/>
            <person name="Zhou C."/>
            <person name="Villen J."/>
            <person name="Beausoleil S.A."/>
            <person name="Bakalarski C.E."/>
            <person name="Elledge S.J."/>
            <person name="Gygi S.P."/>
        </authorList>
    </citation>
    <scope>IDENTIFICATION BY MASS SPECTROMETRY [LARGE SCALE ANALYSIS]</scope>
    <source>
        <tissue>Cervix carcinoma</tissue>
    </source>
</reference>
<reference key="13">
    <citation type="journal article" date="2011" name="BMC Syst. Biol.">
        <title>Initial characterization of the human central proteome.</title>
        <authorList>
            <person name="Burkard T.R."/>
            <person name="Planyavsky M."/>
            <person name="Kaupe I."/>
            <person name="Breitwieser F.P."/>
            <person name="Buerckstuemmer T."/>
            <person name="Bennett K.L."/>
            <person name="Superti-Furga G."/>
            <person name="Colinge J."/>
        </authorList>
    </citation>
    <scope>IDENTIFICATION BY MASS SPECTROMETRY [LARGE SCALE ANALYSIS]</scope>
</reference>
<reference key="14">
    <citation type="journal article" date="2013" name="J. Proteome Res.">
        <title>Toward a comprehensive characterization of a human cancer cell phosphoproteome.</title>
        <authorList>
            <person name="Zhou H."/>
            <person name="Di Palma S."/>
            <person name="Preisinger C."/>
            <person name="Peng M."/>
            <person name="Polat A.N."/>
            <person name="Heck A.J."/>
            <person name="Mohammed S."/>
        </authorList>
    </citation>
    <scope>PHOSPHORYLATION [LARGE SCALE ANALYSIS] AT SER-13; SER-45 AND SER-99</scope>
    <scope>IDENTIFICATION BY MASS SPECTROMETRY [LARGE SCALE ANALYSIS]</scope>
    <source>
        <tissue>Cervix carcinoma</tissue>
        <tissue>Erythroleukemia</tissue>
    </source>
</reference>
<reference key="15">
    <citation type="journal article" date="2014" name="J. Proteomics">
        <title>An enzyme assisted RP-RPLC approach for in-depth analysis of human liver phosphoproteome.</title>
        <authorList>
            <person name="Bian Y."/>
            <person name="Song C."/>
            <person name="Cheng K."/>
            <person name="Dong M."/>
            <person name="Wang F."/>
            <person name="Huang J."/>
            <person name="Sun D."/>
            <person name="Wang L."/>
            <person name="Ye M."/>
            <person name="Zou H."/>
        </authorList>
    </citation>
    <scope>PHOSPHORYLATION [LARGE SCALE ANALYSIS] AT SER-13</scope>
    <scope>IDENTIFICATION BY MASS SPECTROMETRY [LARGE SCALE ANALYSIS]</scope>
    <source>
        <tissue>Liver</tissue>
    </source>
</reference>
<reference key="16">
    <citation type="journal article" date="2015" name="Proteomics">
        <title>N-terminome analysis of the human mitochondrial proteome.</title>
        <authorList>
            <person name="Vaca Jacome A.S."/>
            <person name="Rabilloud T."/>
            <person name="Schaeffer-Reiss C."/>
            <person name="Rompais M."/>
            <person name="Ayoub D."/>
            <person name="Lane L."/>
            <person name="Bairoch A."/>
            <person name="Van Dorsselaer A."/>
            <person name="Carapito C."/>
        </authorList>
    </citation>
    <scope>IDENTIFICATION BY MASS SPECTROMETRY [LARGE SCALE ANALYSIS]</scope>
</reference>
<gene>
    <name type="primary">COPE</name>
</gene>
<name>COPE_HUMAN</name>
<protein>
    <recommendedName>
        <fullName>Coatomer subunit epsilon</fullName>
    </recommendedName>
    <alternativeName>
        <fullName>Epsilon-coat protein</fullName>
        <shortName>Epsilon-COP</shortName>
    </alternativeName>
</protein>
<proteinExistence type="evidence at protein level"/>
<evidence type="ECO:0000250" key="1"/>
<evidence type="ECO:0000269" key="2">
    <source>
    </source>
</evidence>
<evidence type="ECO:0000269" key="3">
    <source>
    </source>
</evidence>
<evidence type="ECO:0000269" key="4">
    <source>
    </source>
</evidence>
<evidence type="ECO:0000269" key="5">
    <source ref="9"/>
</evidence>
<evidence type="ECO:0000303" key="6">
    <source>
    </source>
</evidence>
<evidence type="ECO:0000303" key="7">
    <source>
    </source>
</evidence>
<evidence type="ECO:0000305" key="8"/>
<evidence type="ECO:0007744" key="9">
    <source>
    </source>
</evidence>
<evidence type="ECO:0007744" key="10">
    <source>
    </source>
</evidence>
<evidence type="ECO:0007829" key="11">
    <source>
        <dbReference type="PDB" id="6U3V"/>
    </source>
</evidence>
<feature type="initiator methionine" description="Removed" evidence="5">
    <location>
        <position position="1"/>
    </location>
</feature>
<feature type="chain" id="PRO_0000193851" description="Coatomer subunit epsilon">
    <location>
        <begin position="2"/>
        <end position="308"/>
    </location>
</feature>
<feature type="modified residue" description="Phosphoserine" evidence="9 10">
    <location>
        <position position="13"/>
    </location>
</feature>
<feature type="modified residue" description="Phosphoserine" evidence="9">
    <location>
        <position position="45"/>
    </location>
</feature>
<feature type="modified residue" description="Phosphoserine" evidence="9">
    <location>
        <position position="99"/>
    </location>
</feature>
<feature type="splice variant" id="VSP_042770" description="In isoform 2." evidence="6">
    <original>R</original>
    <variation>S</variation>
    <location>
        <position position="97"/>
    </location>
</feature>
<feature type="splice variant" id="VSP_042771" description="In isoform 2." evidence="6">
    <location>
        <begin position="98"/>
        <end position="148"/>
    </location>
</feature>
<feature type="splice variant" id="VSP_045070" description="In isoform 3." evidence="7">
    <location>
        <begin position="194"/>
        <end position="245"/>
    </location>
</feature>
<feature type="sequence variant" id="VAR_054032" description="In dbSNP:rs2231987.">
    <original>S</original>
    <variation>C</variation>
    <location>
        <position position="13"/>
    </location>
</feature>
<feature type="sequence variant" id="VAR_054033" description="In dbSNP:rs10330." evidence="2 3">
    <original>T</original>
    <variation>I</variation>
    <location>
        <position position="117"/>
    </location>
</feature>
<feature type="helix" evidence="11">
    <location>
        <begin position="20"/>
        <end position="27"/>
    </location>
</feature>
<feature type="helix" evidence="11">
    <location>
        <begin position="31"/>
        <end position="38"/>
    </location>
</feature>
<feature type="helix" evidence="11">
    <location>
        <begin position="47"/>
        <end position="62"/>
    </location>
</feature>
<feature type="helix" evidence="11">
    <location>
        <begin position="66"/>
        <end position="72"/>
    </location>
</feature>
<feature type="helix" evidence="11">
    <location>
        <begin position="79"/>
        <end position="92"/>
    </location>
</feature>
<feature type="helix" evidence="11">
    <location>
        <begin position="94"/>
        <end position="96"/>
    </location>
</feature>
<feature type="helix" evidence="11">
    <location>
        <begin position="97"/>
        <end position="110"/>
    </location>
</feature>
<feature type="helix" evidence="11">
    <location>
        <begin position="117"/>
        <end position="129"/>
    </location>
</feature>
<feature type="helix" evidence="11">
    <location>
        <begin position="133"/>
        <end position="140"/>
    </location>
</feature>
<feature type="helix" evidence="11">
    <location>
        <begin position="146"/>
        <end position="158"/>
    </location>
</feature>
<feature type="helix" evidence="11">
    <location>
        <begin position="162"/>
        <end position="175"/>
    </location>
</feature>
<feature type="helix" evidence="11">
    <location>
        <begin position="180"/>
        <end position="193"/>
    </location>
</feature>
<feature type="helix" evidence="11">
    <location>
        <begin position="197"/>
        <end position="209"/>
    </location>
</feature>
<feature type="turn" evidence="11">
    <location>
        <begin position="210"/>
        <end position="212"/>
    </location>
</feature>
<feature type="helix" evidence="11">
    <location>
        <begin position="216"/>
        <end position="228"/>
    </location>
</feature>
<feature type="helix" evidence="11">
    <location>
        <begin position="232"/>
        <end position="245"/>
    </location>
</feature>
<feature type="helix" evidence="11">
    <location>
        <begin position="250"/>
        <end position="262"/>
    </location>
</feature>
<feature type="helix" evidence="11">
    <location>
        <begin position="267"/>
        <end position="277"/>
    </location>
</feature>
<feature type="helix" evidence="11">
    <location>
        <begin position="286"/>
        <end position="304"/>
    </location>
</feature>
<keyword id="KW-0002">3D-structure</keyword>
<keyword id="KW-0025">Alternative splicing</keyword>
<keyword id="KW-0963">Cytoplasm</keyword>
<keyword id="KW-0968">Cytoplasmic vesicle</keyword>
<keyword id="KW-0903">Direct protein sequencing</keyword>
<keyword id="KW-0931">ER-Golgi transport</keyword>
<keyword id="KW-0333">Golgi apparatus</keyword>
<keyword id="KW-0472">Membrane</keyword>
<keyword id="KW-0597">Phosphoprotein</keyword>
<keyword id="KW-0653">Protein transport</keyword>
<keyword id="KW-1267">Proteomics identification</keyword>
<keyword id="KW-1185">Reference proteome</keyword>
<keyword id="KW-0813">Transport</keyword>
<keyword id="KW-0832">Ubl conjugation</keyword>
<accession>O14579</accession>
<accession>A6NE29</accession>
<accession>A6NKA3</accession>
<accession>O76097</accession>
<accession>Q6IBB8</accession>
<accession>Q9UGP6</accession>
<comment type="function">
    <text evidence="1">The coatomer is a cytosolic protein complex that binds to dilysine motifs and reversibly associates with Golgi non-clathrin-coated vesicles, which further mediate biosynthetic protein transport from the ER, via the Golgi up to the trans Golgi network. The coatomer complex is required for budding from Golgi membranes, and is essential for the retrograde Golgi-to-ER transport of dilysine-tagged proteins. In mammals, the coatomer can only be recruited by membranes associated with ADP-ribosylation factors (ARFs), which are small GTP-binding proteins; the complex also influences the Golgi structural integrity, as well as the processing, activity, and endocytic recycling of LDL receptors (By similarity).</text>
</comment>
<comment type="subunit">
    <text>Oligomeric complex that consists of at least the alpha, beta, beta', gamma, delta, epsilon and zeta subunits.</text>
</comment>
<comment type="interaction">
    <interactant intactId="EBI-711301">
        <id>O14579</id>
    </interactant>
    <interactant intactId="EBI-723480">
        <id>Q9UKI2</id>
        <label>CDC42EP3</label>
    </interactant>
    <organismsDiffer>false</organismsDiffer>
    <experiments>3</experiments>
</comment>
<comment type="interaction">
    <interactant intactId="EBI-711301">
        <id>O14579</id>
    </interactant>
    <interactant intactId="EBI-356273">
        <id>P53621</id>
        <label>COPA</label>
    </interactant>
    <organismsDiffer>false</organismsDiffer>
    <experiments>5</experiments>
</comment>
<comment type="interaction">
    <interactant intactId="EBI-711301">
        <id>O14579</id>
    </interactant>
    <interactant intactId="EBI-2349927">
        <id>Q5JST6</id>
        <label>EFHC2</label>
    </interactant>
    <organismsDiffer>false</organismsDiffer>
    <experiments>6</experiments>
</comment>
<comment type="subcellular location">
    <subcellularLocation>
        <location evidence="1">Cytoplasm</location>
    </subcellularLocation>
    <subcellularLocation>
        <location evidence="1">Golgi apparatus membrane</location>
        <topology evidence="1">Peripheral membrane protein</topology>
        <orientation evidence="1">Cytoplasmic side</orientation>
    </subcellularLocation>
    <subcellularLocation>
        <location evidence="1">Cytoplasmic vesicle</location>
        <location evidence="1">COPI-coated vesicle membrane</location>
        <topology evidence="1">Peripheral membrane protein</topology>
        <orientation evidence="1">Cytoplasmic side</orientation>
    </subcellularLocation>
    <text evidence="1">The coatomer is cytoplasmic or polymerized on the cytoplasmic side of the Golgi, as well as on the vesicles/buds originating from it.</text>
</comment>
<comment type="alternative products">
    <event type="alternative splicing"/>
    <isoform>
        <id>O14579-1</id>
        <name>1</name>
        <sequence type="displayed"/>
    </isoform>
    <isoform>
        <id>O14579-2</id>
        <name>2</name>
        <sequence type="described" ref="VSP_042770 VSP_042771"/>
    </isoform>
    <isoform>
        <id>O14579-3</id>
        <name>3</name>
        <sequence type="described" ref="VSP_045070"/>
    </isoform>
</comment>
<comment type="PTM">
    <text>Phosphorylated by PKA.</text>
</comment>
<comment type="PTM">
    <text evidence="4">Polyubiquitinated by RCHY1 in the presence of androgen, leading to proteasomal degradation.</text>
</comment>
<comment type="similarity">
    <text evidence="8">Belongs to the COPE family.</text>
</comment>
<sequence length="308" mass="34482">MAPPAPGPASGGSGEVDELFDVKNAFYIGSYQQCINEAQRVKLSSPERDVERDVFLYRAYLAQRKFGVVLDEIKPSSAPELQAVRMFADYLAHESRRDSIVAELDREMSRSVDVTNTTFLLMAASIYLHDQNPDAALRALHQGDSLECTAMTVQILLKLDRLDLARKELKRMQDLDEDATLTQLATAWVSLATGGEKLQDAYYIFQEMADKCSPTLLLLNGQAACHMAQGRWEAAEGLLQEALDKDSGYPETLVNLIVLSQHLGKPPEVTNRYLSQLKDAHRSHPFIKEYQAKENDFDRLVLQYAPSA</sequence>
<organism>
    <name type="scientific">Homo sapiens</name>
    <name type="common">Human</name>
    <dbReference type="NCBI Taxonomy" id="9606"/>
    <lineage>
        <taxon>Eukaryota</taxon>
        <taxon>Metazoa</taxon>
        <taxon>Chordata</taxon>
        <taxon>Craniata</taxon>
        <taxon>Vertebrata</taxon>
        <taxon>Euteleostomi</taxon>
        <taxon>Mammalia</taxon>
        <taxon>Eutheria</taxon>
        <taxon>Euarchontoglires</taxon>
        <taxon>Primates</taxon>
        <taxon>Haplorrhini</taxon>
        <taxon>Catarrhini</taxon>
        <taxon>Hominidae</taxon>
        <taxon>Homo</taxon>
    </lineage>
</organism>